<gene>
    <name evidence="1" type="primary">ligA</name>
    <name type="ordered locus">lp_1145</name>
</gene>
<proteinExistence type="inferred from homology"/>
<dbReference type="EC" id="6.5.1.2" evidence="1"/>
<dbReference type="EMBL" id="AL935263">
    <property type="protein sequence ID" value="CCC78535.1"/>
    <property type="molecule type" value="Genomic_DNA"/>
</dbReference>
<dbReference type="RefSeq" id="WP_011101267.1">
    <property type="nucleotide sequence ID" value="NC_004567.2"/>
</dbReference>
<dbReference type="RefSeq" id="YP_004889049.1">
    <property type="nucleotide sequence ID" value="NC_004567.2"/>
</dbReference>
<dbReference type="SMR" id="Q88XQ0"/>
<dbReference type="STRING" id="220668.lp_1145"/>
<dbReference type="EnsemblBacteria" id="CCC78535">
    <property type="protein sequence ID" value="CCC78535"/>
    <property type="gene ID" value="lp_1145"/>
</dbReference>
<dbReference type="KEGG" id="lpl:lp_1145"/>
<dbReference type="PATRIC" id="fig|220668.9.peg.966"/>
<dbReference type="eggNOG" id="COG0272">
    <property type="taxonomic scope" value="Bacteria"/>
</dbReference>
<dbReference type="HOGENOM" id="CLU_007764_2_1_9"/>
<dbReference type="OrthoDB" id="9759736at2"/>
<dbReference type="PhylomeDB" id="Q88XQ0"/>
<dbReference type="Proteomes" id="UP000000432">
    <property type="component" value="Chromosome"/>
</dbReference>
<dbReference type="GO" id="GO:0005829">
    <property type="term" value="C:cytosol"/>
    <property type="evidence" value="ECO:0007669"/>
    <property type="project" value="TreeGrafter"/>
</dbReference>
<dbReference type="GO" id="GO:0003911">
    <property type="term" value="F:DNA ligase (NAD+) activity"/>
    <property type="evidence" value="ECO:0007669"/>
    <property type="project" value="UniProtKB-UniRule"/>
</dbReference>
<dbReference type="GO" id="GO:0046872">
    <property type="term" value="F:metal ion binding"/>
    <property type="evidence" value="ECO:0007669"/>
    <property type="project" value="UniProtKB-KW"/>
</dbReference>
<dbReference type="GO" id="GO:0006281">
    <property type="term" value="P:DNA repair"/>
    <property type="evidence" value="ECO:0007669"/>
    <property type="project" value="UniProtKB-KW"/>
</dbReference>
<dbReference type="GO" id="GO:0006260">
    <property type="term" value="P:DNA replication"/>
    <property type="evidence" value="ECO:0007669"/>
    <property type="project" value="UniProtKB-KW"/>
</dbReference>
<dbReference type="CDD" id="cd17748">
    <property type="entry name" value="BRCT_DNA_ligase_like"/>
    <property type="match status" value="1"/>
</dbReference>
<dbReference type="CDD" id="cd00114">
    <property type="entry name" value="LIGANc"/>
    <property type="match status" value="1"/>
</dbReference>
<dbReference type="FunFam" id="1.10.150.20:FF:000006">
    <property type="entry name" value="DNA ligase"/>
    <property type="match status" value="1"/>
</dbReference>
<dbReference type="FunFam" id="1.10.150.20:FF:000007">
    <property type="entry name" value="DNA ligase"/>
    <property type="match status" value="1"/>
</dbReference>
<dbReference type="FunFam" id="2.40.50.140:FF:000012">
    <property type="entry name" value="DNA ligase"/>
    <property type="match status" value="1"/>
</dbReference>
<dbReference type="FunFam" id="3.30.470.30:FF:000001">
    <property type="entry name" value="DNA ligase"/>
    <property type="match status" value="1"/>
</dbReference>
<dbReference type="Gene3D" id="6.20.10.30">
    <property type="match status" value="1"/>
</dbReference>
<dbReference type="Gene3D" id="1.10.150.20">
    <property type="entry name" value="5' to 3' exonuclease, C-terminal subdomain"/>
    <property type="match status" value="2"/>
</dbReference>
<dbReference type="Gene3D" id="3.40.50.10190">
    <property type="entry name" value="BRCT domain"/>
    <property type="match status" value="1"/>
</dbReference>
<dbReference type="Gene3D" id="3.30.470.30">
    <property type="entry name" value="DNA ligase/mRNA capping enzyme"/>
    <property type="match status" value="1"/>
</dbReference>
<dbReference type="Gene3D" id="1.10.287.610">
    <property type="entry name" value="Helix hairpin bin"/>
    <property type="match status" value="1"/>
</dbReference>
<dbReference type="Gene3D" id="2.40.50.140">
    <property type="entry name" value="Nucleic acid-binding proteins"/>
    <property type="match status" value="1"/>
</dbReference>
<dbReference type="HAMAP" id="MF_01588">
    <property type="entry name" value="DNA_ligase_A"/>
    <property type="match status" value="1"/>
</dbReference>
<dbReference type="InterPro" id="IPR001357">
    <property type="entry name" value="BRCT_dom"/>
</dbReference>
<dbReference type="InterPro" id="IPR036420">
    <property type="entry name" value="BRCT_dom_sf"/>
</dbReference>
<dbReference type="InterPro" id="IPR041663">
    <property type="entry name" value="DisA/LigA_HHH"/>
</dbReference>
<dbReference type="InterPro" id="IPR001679">
    <property type="entry name" value="DNA_ligase"/>
</dbReference>
<dbReference type="InterPro" id="IPR018239">
    <property type="entry name" value="DNA_ligase_AS"/>
</dbReference>
<dbReference type="InterPro" id="IPR033136">
    <property type="entry name" value="DNA_ligase_CS"/>
</dbReference>
<dbReference type="InterPro" id="IPR013839">
    <property type="entry name" value="DNAligase_adenylation"/>
</dbReference>
<dbReference type="InterPro" id="IPR013840">
    <property type="entry name" value="DNAligase_N"/>
</dbReference>
<dbReference type="InterPro" id="IPR012340">
    <property type="entry name" value="NA-bd_OB-fold"/>
</dbReference>
<dbReference type="InterPro" id="IPR004150">
    <property type="entry name" value="NAD_DNA_ligase_OB"/>
</dbReference>
<dbReference type="InterPro" id="IPR010994">
    <property type="entry name" value="RuvA_2-like"/>
</dbReference>
<dbReference type="InterPro" id="IPR004149">
    <property type="entry name" value="Znf_DNAligase_C4"/>
</dbReference>
<dbReference type="NCBIfam" id="TIGR00575">
    <property type="entry name" value="dnlj"/>
    <property type="match status" value="1"/>
</dbReference>
<dbReference type="NCBIfam" id="NF005932">
    <property type="entry name" value="PRK07956.1"/>
    <property type="match status" value="1"/>
</dbReference>
<dbReference type="PANTHER" id="PTHR23389">
    <property type="entry name" value="CHROMOSOME TRANSMISSION FIDELITY FACTOR 18"/>
    <property type="match status" value="1"/>
</dbReference>
<dbReference type="PANTHER" id="PTHR23389:SF9">
    <property type="entry name" value="DNA LIGASE"/>
    <property type="match status" value="1"/>
</dbReference>
<dbReference type="Pfam" id="PF00533">
    <property type="entry name" value="BRCT"/>
    <property type="match status" value="1"/>
</dbReference>
<dbReference type="Pfam" id="PF01653">
    <property type="entry name" value="DNA_ligase_aden"/>
    <property type="match status" value="1"/>
</dbReference>
<dbReference type="Pfam" id="PF03120">
    <property type="entry name" value="DNA_ligase_OB"/>
    <property type="match status" value="1"/>
</dbReference>
<dbReference type="Pfam" id="PF03119">
    <property type="entry name" value="DNA_ligase_ZBD"/>
    <property type="match status" value="1"/>
</dbReference>
<dbReference type="Pfam" id="PF12826">
    <property type="entry name" value="HHH_2"/>
    <property type="match status" value="1"/>
</dbReference>
<dbReference type="PIRSF" id="PIRSF001604">
    <property type="entry name" value="LigA"/>
    <property type="match status" value="1"/>
</dbReference>
<dbReference type="SMART" id="SM00292">
    <property type="entry name" value="BRCT"/>
    <property type="match status" value="1"/>
</dbReference>
<dbReference type="SMART" id="SM00532">
    <property type="entry name" value="LIGANc"/>
    <property type="match status" value="1"/>
</dbReference>
<dbReference type="SUPFAM" id="SSF52113">
    <property type="entry name" value="BRCT domain"/>
    <property type="match status" value="1"/>
</dbReference>
<dbReference type="SUPFAM" id="SSF56091">
    <property type="entry name" value="DNA ligase/mRNA capping enzyme, catalytic domain"/>
    <property type="match status" value="1"/>
</dbReference>
<dbReference type="SUPFAM" id="SSF50249">
    <property type="entry name" value="Nucleic acid-binding proteins"/>
    <property type="match status" value="1"/>
</dbReference>
<dbReference type="SUPFAM" id="SSF47781">
    <property type="entry name" value="RuvA domain 2-like"/>
    <property type="match status" value="1"/>
</dbReference>
<dbReference type="PROSITE" id="PS50172">
    <property type="entry name" value="BRCT"/>
    <property type="match status" value="1"/>
</dbReference>
<dbReference type="PROSITE" id="PS01055">
    <property type="entry name" value="DNA_LIGASE_N1"/>
    <property type="match status" value="1"/>
</dbReference>
<dbReference type="PROSITE" id="PS01056">
    <property type="entry name" value="DNA_LIGASE_N2"/>
    <property type="match status" value="1"/>
</dbReference>
<name>DNLJ_LACPL</name>
<protein>
    <recommendedName>
        <fullName evidence="1">DNA ligase</fullName>
        <ecNumber evidence="1">6.5.1.2</ecNumber>
    </recommendedName>
    <alternativeName>
        <fullName evidence="1">Polydeoxyribonucleotide synthase [NAD(+)]</fullName>
    </alternativeName>
</protein>
<reference key="1">
    <citation type="journal article" date="2003" name="Proc. Natl. Acad. Sci. U.S.A.">
        <title>Complete genome sequence of Lactobacillus plantarum WCFS1.</title>
        <authorList>
            <person name="Kleerebezem M."/>
            <person name="Boekhorst J."/>
            <person name="van Kranenburg R."/>
            <person name="Molenaar D."/>
            <person name="Kuipers O.P."/>
            <person name="Leer R."/>
            <person name="Tarchini R."/>
            <person name="Peters S.A."/>
            <person name="Sandbrink H.M."/>
            <person name="Fiers M.W.E.J."/>
            <person name="Stiekema W."/>
            <person name="Klein Lankhorst R.M."/>
            <person name="Bron P.A."/>
            <person name="Hoffer S.M."/>
            <person name="Nierop Groot M.N."/>
            <person name="Kerkhoven R."/>
            <person name="De Vries M."/>
            <person name="Ursing B."/>
            <person name="De Vos W.M."/>
            <person name="Siezen R.J."/>
        </authorList>
    </citation>
    <scope>NUCLEOTIDE SEQUENCE [LARGE SCALE GENOMIC DNA]</scope>
    <source>
        <strain>ATCC BAA-793 / NCIMB 8826 / WCFS1</strain>
    </source>
</reference>
<reference key="2">
    <citation type="journal article" date="2012" name="J. Bacteriol.">
        <title>Complete resequencing and reannotation of the Lactobacillus plantarum WCFS1 genome.</title>
        <authorList>
            <person name="Siezen R.J."/>
            <person name="Francke C."/>
            <person name="Renckens B."/>
            <person name="Boekhorst J."/>
            <person name="Wels M."/>
            <person name="Kleerebezem M."/>
            <person name="van Hijum S.A."/>
        </authorList>
    </citation>
    <scope>NUCLEOTIDE SEQUENCE [LARGE SCALE GENOMIC DNA]</scope>
    <scope>GENOME REANNOTATION</scope>
    <source>
        <strain>ATCC BAA-793 / NCIMB 8826 / WCFS1</strain>
    </source>
</reference>
<feature type="chain" id="PRO_0000313278" description="DNA ligase">
    <location>
        <begin position="1"/>
        <end position="679"/>
    </location>
</feature>
<feature type="domain" description="BRCT" evidence="1">
    <location>
        <begin position="597"/>
        <end position="679"/>
    </location>
</feature>
<feature type="active site" description="N6-AMP-lysine intermediate" evidence="1">
    <location>
        <position position="122"/>
    </location>
</feature>
<feature type="binding site" evidence="1">
    <location>
        <begin position="41"/>
        <end position="45"/>
    </location>
    <ligand>
        <name>NAD(+)</name>
        <dbReference type="ChEBI" id="CHEBI:57540"/>
    </ligand>
</feature>
<feature type="binding site" evidence="1">
    <location>
        <begin position="90"/>
        <end position="91"/>
    </location>
    <ligand>
        <name>NAD(+)</name>
        <dbReference type="ChEBI" id="CHEBI:57540"/>
    </ligand>
</feature>
<feature type="binding site" evidence="1">
    <location>
        <position position="120"/>
    </location>
    <ligand>
        <name>NAD(+)</name>
        <dbReference type="ChEBI" id="CHEBI:57540"/>
    </ligand>
</feature>
<feature type="binding site" evidence="1">
    <location>
        <position position="143"/>
    </location>
    <ligand>
        <name>NAD(+)</name>
        <dbReference type="ChEBI" id="CHEBI:57540"/>
    </ligand>
</feature>
<feature type="binding site" evidence="1">
    <location>
        <position position="177"/>
    </location>
    <ligand>
        <name>NAD(+)</name>
        <dbReference type="ChEBI" id="CHEBI:57540"/>
    </ligand>
</feature>
<feature type="binding site" evidence="1">
    <location>
        <position position="293"/>
    </location>
    <ligand>
        <name>NAD(+)</name>
        <dbReference type="ChEBI" id="CHEBI:57540"/>
    </ligand>
</feature>
<feature type="binding site" evidence="1">
    <location>
        <position position="317"/>
    </location>
    <ligand>
        <name>NAD(+)</name>
        <dbReference type="ChEBI" id="CHEBI:57540"/>
    </ligand>
</feature>
<feature type="binding site" evidence="1">
    <location>
        <position position="411"/>
    </location>
    <ligand>
        <name>Zn(2+)</name>
        <dbReference type="ChEBI" id="CHEBI:29105"/>
    </ligand>
</feature>
<feature type="binding site" evidence="1">
    <location>
        <position position="414"/>
    </location>
    <ligand>
        <name>Zn(2+)</name>
        <dbReference type="ChEBI" id="CHEBI:29105"/>
    </ligand>
</feature>
<feature type="binding site" evidence="1">
    <location>
        <position position="429"/>
    </location>
    <ligand>
        <name>Zn(2+)</name>
        <dbReference type="ChEBI" id="CHEBI:29105"/>
    </ligand>
</feature>
<feature type="binding site" evidence="1">
    <location>
        <position position="434"/>
    </location>
    <ligand>
        <name>Zn(2+)</name>
        <dbReference type="ChEBI" id="CHEBI:29105"/>
    </ligand>
</feature>
<sequence>MADKPNTMTVEQAADEAAALRQTLNEWRRQYYDEDAPNVEDSVYDQKYERLVELEQTFPQLVTPDSPTQLVGGTVKAGFDKVTHEIPMLSLGDVFSQAELQEFVDRLEQNVGHPVDYNCELKIDGLALSLRYEDGVLVQGSTRGNGTVGEDITANIKTIKSIPQRLTRPLTIDVRGECYMPKAAFAALNERREAAGEPVFANPRNAAAGTLRQLDSRVVAERQLSTFMYNIADYEPLTARTQSDMLTEFADLGFAINPDFKVAHSMADVFSYIDHYQNERPELAYGIDGIVIKANPLPLQRSLGATVKVPRWAIAFKFPPDEQPTLLKDVEWTVGRTGVVTPTAVMEPVQLAGTTVARASLHNPDYVAAKDVRIGDTVLLHKAGDIIPEISSVDLAKRPKDAQPLVIPTTCPSCGAPLVHLEDEVALRCINPKCPAQVQEGLVHFASRNAMNIDGLGPRIIAQLYANRLVSDVAGLYRLTKAQLLTLDKIKDKSAEKLLTAIDRSRDNSLERLLFGLGIRHVGAKVARLIAQHFGTIEALMAASQEEIAAIDSMGDVIANAVVQYFESDEVHTLIRELQAVNVNTTYQGPSATVAEDSNSWFAGKRVVLTGKLESFTRPDATQWLQAHGATVMGSVSKKTDLVIAGSDAGSKLQKAQQLDITVWDEARFSETMREDAQA</sequence>
<comment type="function">
    <text evidence="1">DNA ligase that catalyzes the formation of phosphodiester linkages between 5'-phosphoryl and 3'-hydroxyl groups in double-stranded DNA using NAD as a coenzyme and as the energy source for the reaction. It is essential for DNA replication and repair of damaged DNA.</text>
</comment>
<comment type="catalytic activity">
    <reaction evidence="1">
        <text>NAD(+) + (deoxyribonucleotide)n-3'-hydroxyl + 5'-phospho-(deoxyribonucleotide)m = (deoxyribonucleotide)n+m + AMP + beta-nicotinamide D-nucleotide.</text>
        <dbReference type="EC" id="6.5.1.2"/>
    </reaction>
</comment>
<comment type="cofactor">
    <cofactor evidence="1">
        <name>Mg(2+)</name>
        <dbReference type="ChEBI" id="CHEBI:18420"/>
    </cofactor>
    <cofactor evidence="1">
        <name>Mn(2+)</name>
        <dbReference type="ChEBI" id="CHEBI:29035"/>
    </cofactor>
</comment>
<comment type="similarity">
    <text evidence="1">Belongs to the NAD-dependent DNA ligase family. LigA subfamily.</text>
</comment>
<accession>Q88XQ0</accession>
<accession>F9UMU6</accession>
<keyword id="KW-0227">DNA damage</keyword>
<keyword id="KW-0234">DNA repair</keyword>
<keyword id="KW-0235">DNA replication</keyword>
<keyword id="KW-0436">Ligase</keyword>
<keyword id="KW-0460">Magnesium</keyword>
<keyword id="KW-0464">Manganese</keyword>
<keyword id="KW-0479">Metal-binding</keyword>
<keyword id="KW-0520">NAD</keyword>
<keyword id="KW-1185">Reference proteome</keyword>
<keyword id="KW-0862">Zinc</keyword>
<evidence type="ECO:0000255" key="1">
    <source>
        <dbReference type="HAMAP-Rule" id="MF_01588"/>
    </source>
</evidence>
<organism>
    <name type="scientific">Lactiplantibacillus plantarum (strain ATCC BAA-793 / NCIMB 8826 / WCFS1)</name>
    <name type="common">Lactobacillus plantarum</name>
    <dbReference type="NCBI Taxonomy" id="220668"/>
    <lineage>
        <taxon>Bacteria</taxon>
        <taxon>Bacillati</taxon>
        <taxon>Bacillota</taxon>
        <taxon>Bacilli</taxon>
        <taxon>Lactobacillales</taxon>
        <taxon>Lactobacillaceae</taxon>
        <taxon>Lactiplantibacillus</taxon>
    </lineage>
</organism>